<evidence type="ECO:0000255" key="1">
    <source>
        <dbReference type="HAMAP-Rule" id="MF_00333"/>
    </source>
</evidence>
<gene>
    <name evidence="1" type="primary">hemF</name>
    <name type="ordered locus">SeSA_A2687</name>
</gene>
<keyword id="KW-0963">Cytoplasm</keyword>
<keyword id="KW-0350">Heme biosynthesis</keyword>
<keyword id="KW-0479">Metal-binding</keyword>
<keyword id="KW-0560">Oxidoreductase</keyword>
<keyword id="KW-0627">Porphyrin biosynthesis</keyword>
<protein>
    <recommendedName>
        <fullName evidence="1">Oxygen-dependent coproporphyrinogen-III oxidase</fullName>
        <shortName evidence="1">CPO</shortName>
        <shortName evidence="1">Coprogen oxidase</shortName>
        <shortName evidence="1">Coproporphyrinogenase</shortName>
        <ecNumber evidence="1">1.3.3.3</ecNumber>
    </recommendedName>
</protein>
<organism>
    <name type="scientific">Salmonella schwarzengrund (strain CVM19633)</name>
    <dbReference type="NCBI Taxonomy" id="439843"/>
    <lineage>
        <taxon>Bacteria</taxon>
        <taxon>Pseudomonadati</taxon>
        <taxon>Pseudomonadota</taxon>
        <taxon>Gammaproteobacteria</taxon>
        <taxon>Enterobacterales</taxon>
        <taxon>Enterobacteriaceae</taxon>
        <taxon>Salmonella</taxon>
    </lineage>
</organism>
<dbReference type="EC" id="1.3.3.3" evidence="1"/>
<dbReference type="EMBL" id="CP001127">
    <property type="protein sequence ID" value="ACF92455.1"/>
    <property type="molecule type" value="Genomic_DNA"/>
</dbReference>
<dbReference type="RefSeq" id="WP_000801324.1">
    <property type="nucleotide sequence ID" value="NC_011094.1"/>
</dbReference>
<dbReference type="SMR" id="B4TR28"/>
<dbReference type="KEGG" id="sew:SeSA_A2687"/>
<dbReference type="HOGENOM" id="CLU_026169_0_1_6"/>
<dbReference type="UniPathway" id="UPA00251">
    <property type="reaction ID" value="UER00322"/>
</dbReference>
<dbReference type="Proteomes" id="UP000001865">
    <property type="component" value="Chromosome"/>
</dbReference>
<dbReference type="GO" id="GO:0005737">
    <property type="term" value="C:cytoplasm"/>
    <property type="evidence" value="ECO:0007669"/>
    <property type="project" value="UniProtKB-SubCell"/>
</dbReference>
<dbReference type="GO" id="GO:0004109">
    <property type="term" value="F:coproporphyrinogen oxidase activity"/>
    <property type="evidence" value="ECO:0007669"/>
    <property type="project" value="UniProtKB-UniRule"/>
</dbReference>
<dbReference type="GO" id="GO:0046872">
    <property type="term" value="F:metal ion binding"/>
    <property type="evidence" value="ECO:0007669"/>
    <property type="project" value="UniProtKB-KW"/>
</dbReference>
<dbReference type="GO" id="GO:0042803">
    <property type="term" value="F:protein homodimerization activity"/>
    <property type="evidence" value="ECO:0000250"/>
    <property type="project" value="UniProtKB"/>
</dbReference>
<dbReference type="GO" id="GO:0006782">
    <property type="term" value="P:protoporphyrinogen IX biosynthetic process"/>
    <property type="evidence" value="ECO:0007669"/>
    <property type="project" value="UniProtKB-UniRule"/>
</dbReference>
<dbReference type="FunFam" id="3.40.1500.10:FF:000001">
    <property type="entry name" value="Oxygen-dependent coproporphyrinogen-III oxidase"/>
    <property type="match status" value="1"/>
</dbReference>
<dbReference type="Gene3D" id="3.40.1500.10">
    <property type="entry name" value="Coproporphyrinogen III oxidase, aerobic"/>
    <property type="match status" value="1"/>
</dbReference>
<dbReference type="HAMAP" id="MF_00333">
    <property type="entry name" value="Coprogen_oxidas"/>
    <property type="match status" value="1"/>
</dbReference>
<dbReference type="InterPro" id="IPR001260">
    <property type="entry name" value="Coprogen_oxidase_aer"/>
</dbReference>
<dbReference type="InterPro" id="IPR036406">
    <property type="entry name" value="Coprogen_oxidase_aer_sf"/>
</dbReference>
<dbReference type="InterPro" id="IPR018375">
    <property type="entry name" value="Coprogen_oxidase_CS"/>
</dbReference>
<dbReference type="NCBIfam" id="NF003727">
    <property type="entry name" value="PRK05330.1"/>
    <property type="match status" value="1"/>
</dbReference>
<dbReference type="PANTHER" id="PTHR10755">
    <property type="entry name" value="COPROPORPHYRINOGEN III OXIDASE, MITOCHONDRIAL"/>
    <property type="match status" value="1"/>
</dbReference>
<dbReference type="PANTHER" id="PTHR10755:SF0">
    <property type="entry name" value="OXYGEN-DEPENDENT COPROPORPHYRINOGEN-III OXIDASE, MITOCHONDRIAL"/>
    <property type="match status" value="1"/>
</dbReference>
<dbReference type="Pfam" id="PF01218">
    <property type="entry name" value="Coprogen_oxidas"/>
    <property type="match status" value="1"/>
</dbReference>
<dbReference type="PIRSF" id="PIRSF000166">
    <property type="entry name" value="Coproporphyri_ox"/>
    <property type="match status" value="1"/>
</dbReference>
<dbReference type="PRINTS" id="PR00073">
    <property type="entry name" value="COPRGNOXDASE"/>
</dbReference>
<dbReference type="SUPFAM" id="SSF102886">
    <property type="entry name" value="Coproporphyrinogen III oxidase"/>
    <property type="match status" value="1"/>
</dbReference>
<dbReference type="PROSITE" id="PS01021">
    <property type="entry name" value="COPROGEN_OXIDASE"/>
    <property type="match status" value="1"/>
</dbReference>
<comment type="function">
    <text evidence="1">Involved in the heme biosynthesis. Catalyzes the aerobic oxidative decarboxylation of propionate groups of rings A and B of coproporphyrinogen-III to yield the vinyl groups in protoporphyrinogen-IX.</text>
</comment>
<comment type="catalytic activity">
    <reaction evidence="1">
        <text>coproporphyrinogen III + O2 + 2 H(+) = protoporphyrinogen IX + 2 CO2 + 2 H2O</text>
        <dbReference type="Rhea" id="RHEA:18257"/>
        <dbReference type="ChEBI" id="CHEBI:15377"/>
        <dbReference type="ChEBI" id="CHEBI:15378"/>
        <dbReference type="ChEBI" id="CHEBI:15379"/>
        <dbReference type="ChEBI" id="CHEBI:16526"/>
        <dbReference type="ChEBI" id="CHEBI:57307"/>
        <dbReference type="ChEBI" id="CHEBI:57309"/>
        <dbReference type="EC" id="1.3.3.3"/>
    </reaction>
</comment>
<comment type="cofactor">
    <cofactor evidence="1">
        <name>a divalent metal cation</name>
        <dbReference type="ChEBI" id="CHEBI:60240"/>
    </cofactor>
</comment>
<comment type="pathway">
    <text evidence="1">Porphyrin-containing compound metabolism; protoporphyrin-IX biosynthesis; protoporphyrinogen-IX from coproporphyrinogen-III (O2 route): step 1/1.</text>
</comment>
<comment type="subunit">
    <text evidence="1">Homodimer.</text>
</comment>
<comment type="subcellular location">
    <subcellularLocation>
        <location evidence="1">Cytoplasm</location>
    </subcellularLocation>
</comment>
<comment type="similarity">
    <text evidence="1">Belongs to the aerobic coproporphyrinogen-III oxidase family.</text>
</comment>
<feature type="chain" id="PRO_1000119825" description="Oxygen-dependent coproporphyrinogen-III oxidase">
    <location>
        <begin position="1"/>
        <end position="299"/>
    </location>
</feature>
<feature type="region of interest" description="Important for dimerization" evidence="1">
    <location>
        <begin position="240"/>
        <end position="275"/>
    </location>
</feature>
<feature type="active site" description="Proton donor" evidence="1">
    <location>
        <position position="106"/>
    </location>
</feature>
<feature type="binding site" evidence="1">
    <location>
        <position position="92"/>
    </location>
    <ligand>
        <name>substrate</name>
    </ligand>
</feature>
<feature type="binding site" evidence="1">
    <location>
        <position position="96"/>
    </location>
    <ligand>
        <name>a divalent metal cation</name>
        <dbReference type="ChEBI" id="CHEBI:60240"/>
    </ligand>
</feature>
<feature type="binding site" evidence="1">
    <location>
        <position position="106"/>
    </location>
    <ligand>
        <name>a divalent metal cation</name>
        <dbReference type="ChEBI" id="CHEBI:60240"/>
    </ligand>
</feature>
<feature type="binding site" evidence="1">
    <location>
        <begin position="108"/>
        <end position="110"/>
    </location>
    <ligand>
        <name>substrate</name>
    </ligand>
</feature>
<feature type="binding site" evidence="1">
    <location>
        <position position="145"/>
    </location>
    <ligand>
        <name>a divalent metal cation</name>
        <dbReference type="ChEBI" id="CHEBI:60240"/>
    </ligand>
</feature>
<feature type="binding site" evidence="1">
    <location>
        <position position="175"/>
    </location>
    <ligand>
        <name>a divalent metal cation</name>
        <dbReference type="ChEBI" id="CHEBI:60240"/>
    </ligand>
</feature>
<feature type="binding site" evidence="1">
    <location>
        <begin position="258"/>
        <end position="260"/>
    </location>
    <ligand>
        <name>substrate</name>
    </ligand>
</feature>
<feature type="site" description="Important for dimerization" evidence="1">
    <location>
        <position position="175"/>
    </location>
</feature>
<accession>B4TR28</accession>
<name>HEM6_SALSV</name>
<sequence length="299" mass="34343">MKPDAHHVKQFLLRLQDDICQKLSAADGANFVEDSWRREAGGGGRSRVLRNGGIFEQAGVNFSHVHGDAMPASATAHRPELAGRSFEAMGVSLVVHPHNPYIPTSHANVRFFIAEKPGADPVWWFGGGFDLTPYYGFEEDAVHWHRTARDLCQPFGDDVYPRYKKWCDDYFFLKHRNEQRGVGGLFFDDLNTPDFDHCFAFMQAVGNGYTQAYLPIVERRKAMVWGERERNFQLYRRGRYVEFNLVWDRGTLFGLQTGGRTESILMSMPPLVRWEYDWQPEAGSPEAALSEFIQVRDWV</sequence>
<proteinExistence type="inferred from homology"/>
<reference key="1">
    <citation type="journal article" date="2011" name="J. Bacteriol.">
        <title>Comparative genomics of 28 Salmonella enterica isolates: evidence for CRISPR-mediated adaptive sublineage evolution.</title>
        <authorList>
            <person name="Fricke W.F."/>
            <person name="Mammel M.K."/>
            <person name="McDermott P.F."/>
            <person name="Tartera C."/>
            <person name="White D.G."/>
            <person name="Leclerc J.E."/>
            <person name="Ravel J."/>
            <person name="Cebula T.A."/>
        </authorList>
    </citation>
    <scope>NUCLEOTIDE SEQUENCE [LARGE SCALE GENOMIC DNA]</scope>
    <source>
        <strain>CVM19633</strain>
    </source>
</reference>